<organism>
    <name type="scientific">Saccharomyces cerevisiae (strain YJM789)</name>
    <name type="common">Baker's yeast</name>
    <dbReference type="NCBI Taxonomy" id="307796"/>
    <lineage>
        <taxon>Eukaryota</taxon>
        <taxon>Fungi</taxon>
        <taxon>Dikarya</taxon>
        <taxon>Ascomycota</taxon>
        <taxon>Saccharomycotina</taxon>
        <taxon>Saccharomycetes</taxon>
        <taxon>Saccharomycetales</taxon>
        <taxon>Saccharomycetaceae</taxon>
        <taxon>Saccharomyces</taxon>
    </lineage>
</organism>
<keyword id="KW-0067">ATP-binding</keyword>
<keyword id="KW-0175">Coiled coil</keyword>
<keyword id="KW-0347">Helicase</keyword>
<keyword id="KW-0378">Hydrolase</keyword>
<keyword id="KW-0547">Nucleotide-binding</keyword>
<keyword id="KW-0539">Nucleus</keyword>
<keyword id="KW-0597">Phosphoprotein</keyword>
<keyword id="KW-0690">Ribosome biogenesis</keyword>
<keyword id="KW-0694">RNA-binding</keyword>
<sequence>MVVGTKKYSNLDFVPTISDSEDDVPILDSSDDEKVEAKKTTKKRKGKNNKKKVSEGDNLDEDVHEDLDAGFKFDLDADDTTSNFQGWNFLAEGESNKDDAEAFVKKDVDLDKIIRRKGGLVKMAHIDSKQEEETEKEKVEKENDSDDEELAMDGFGMGAPMNNGDENQSEEEEEEEEEEEEEEEEEEEEQEEMTLEKGGKDDEIDEEDDSEEAKADFYAPETEGDEAKKQMYENFNSLSLSRPVLKGLASLGYVKPSPIQSATIPIALLGKDIIAGAVTGSGKTAAFMIPIIERLLYKPAKIASTRVIVLLPTRELAIQVADVGKQIARFVSGITFGLAVGGLNLRQQEQMLKSRPDIVIATPGRFIDHIRNSASFNVDSVEILVMDEADRMLEEGFQDELNEIMGLLPSNRQNLLFSATMNSKIKSLVSLSLKKPVRIMIDPPKKAATKLTQEFVRIRKRDHLKPALLFNLIRKLDPTGQKRIVVFVARKETAHRLRIIMGLLGMSVGELHGSLTQEQRLDSVNKFKNLEVPVLICTDLASRGLDIPKIEVVINYDMPKSYEIYLHRVGRTARAGREGRSVTFVGESSQDRSIVRAAIKSVEENKSLTQGKALGRNVDWVQIEETNKLVESMNDTIEDILVEEKEEKEILRAEMQLRKGENMLKHKKEIQARPRRTWFQSESDKKNSKVLGALSRNKKVTNSKKRKREEAKADGNGARSYRKTKTDRIADQERTFKKQKSTNSNKKKGFKSRR</sequence>
<dbReference type="EC" id="3.6.4.13"/>
<dbReference type="EMBL" id="AAFW02000167">
    <property type="protein sequence ID" value="EDN59539.1"/>
    <property type="molecule type" value="Genomic_DNA"/>
</dbReference>
<dbReference type="SMR" id="A7A0P8"/>
<dbReference type="HOGENOM" id="CLU_003041_3_2_1"/>
<dbReference type="Proteomes" id="UP000007060">
    <property type="component" value="Unassembled WGS sequence"/>
</dbReference>
<dbReference type="GO" id="GO:0005829">
    <property type="term" value="C:cytosol"/>
    <property type="evidence" value="ECO:0007669"/>
    <property type="project" value="TreeGrafter"/>
</dbReference>
<dbReference type="GO" id="GO:0005730">
    <property type="term" value="C:nucleolus"/>
    <property type="evidence" value="ECO:0007669"/>
    <property type="project" value="UniProtKB-SubCell"/>
</dbReference>
<dbReference type="GO" id="GO:0005524">
    <property type="term" value="F:ATP binding"/>
    <property type="evidence" value="ECO:0007669"/>
    <property type="project" value="UniProtKB-KW"/>
</dbReference>
<dbReference type="GO" id="GO:0016887">
    <property type="term" value="F:ATP hydrolysis activity"/>
    <property type="evidence" value="ECO:0007669"/>
    <property type="project" value="RHEA"/>
</dbReference>
<dbReference type="GO" id="GO:0003723">
    <property type="term" value="F:RNA binding"/>
    <property type="evidence" value="ECO:0007669"/>
    <property type="project" value="UniProtKB-KW"/>
</dbReference>
<dbReference type="GO" id="GO:0003724">
    <property type="term" value="F:RNA helicase activity"/>
    <property type="evidence" value="ECO:0007669"/>
    <property type="project" value="UniProtKB-EC"/>
</dbReference>
<dbReference type="GO" id="GO:0006364">
    <property type="term" value="P:rRNA processing"/>
    <property type="evidence" value="ECO:0007669"/>
    <property type="project" value="UniProtKB-ARBA"/>
</dbReference>
<dbReference type="CDD" id="cd17947">
    <property type="entry name" value="DEADc_DDX27"/>
    <property type="match status" value="1"/>
</dbReference>
<dbReference type="CDD" id="cd18787">
    <property type="entry name" value="SF2_C_DEAD"/>
    <property type="match status" value="1"/>
</dbReference>
<dbReference type="FunFam" id="3.40.50.300:FF:000842">
    <property type="entry name" value="ATP-dependent RNA helicase DRS1"/>
    <property type="match status" value="1"/>
</dbReference>
<dbReference type="Gene3D" id="3.40.50.300">
    <property type="entry name" value="P-loop containing nucleotide triphosphate hydrolases"/>
    <property type="match status" value="2"/>
</dbReference>
<dbReference type="InterPro" id="IPR011545">
    <property type="entry name" value="DEAD/DEAH_box_helicase_dom"/>
</dbReference>
<dbReference type="InterPro" id="IPR050079">
    <property type="entry name" value="DEAD_box_RNA_helicase"/>
</dbReference>
<dbReference type="InterPro" id="IPR014001">
    <property type="entry name" value="Helicase_ATP-bd"/>
</dbReference>
<dbReference type="InterPro" id="IPR001650">
    <property type="entry name" value="Helicase_C-like"/>
</dbReference>
<dbReference type="InterPro" id="IPR027417">
    <property type="entry name" value="P-loop_NTPase"/>
</dbReference>
<dbReference type="InterPro" id="IPR000629">
    <property type="entry name" value="RNA-helicase_DEAD-box_CS"/>
</dbReference>
<dbReference type="InterPro" id="IPR014014">
    <property type="entry name" value="RNA_helicase_DEAD_Q_motif"/>
</dbReference>
<dbReference type="PANTHER" id="PTHR47959:SF1">
    <property type="entry name" value="ATP-DEPENDENT RNA HELICASE DBPA"/>
    <property type="match status" value="1"/>
</dbReference>
<dbReference type="PANTHER" id="PTHR47959">
    <property type="entry name" value="ATP-DEPENDENT RNA HELICASE RHLE-RELATED"/>
    <property type="match status" value="1"/>
</dbReference>
<dbReference type="Pfam" id="PF00270">
    <property type="entry name" value="DEAD"/>
    <property type="match status" value="1"/>
</dbReference>
<dbReference type="Pfam" id="PF00271">
    <property type="entry name" value="Helicase_C"/>
    <property type="match status" value="1"/>
</dbReference>
<dbReference type="SMART" id="SM00487">
    <property type="entry name" value="DEXDc"/>
    <property type="match status" value="1"/>
</dbReference>
<dbReference type="SMART" id="SM00490">
    <property type="entry name" value="HELICc"/>
    <property type="match status" value="1"/>
</dbReference>
<dbReference type="SUPFAM" id="SSF52540">
    <property type="entry name" value="P-loop containing nucleoside triphosphate hydrolases"/>
    <property type="match status" value="1"/>
</dbReference>
<dbReference type="PROSITE" id="PS00039">
    <property type="entry name" value="DEAD_ATP_HELICASE"/>
    <property type="match status" value="1"/>
</dbReference>
<dbReference type="PROSITE" id="PS51192">
    <property type="entry name" value="HELICASE_ATP_BIND_1"/>
    <property type="match status" value="1"/>
</dbReference>
<dbReference type="PROSITE" id="PS51194">
    <property type="entry name" value="HELICASE_CTER"/>
    <property type="match status" value="1"/>
</dbReference>
<dbReference type="PROSITE" id="PS51195">
    <property type="entry name" value="Q_MOTIF"/>
    <property type="match status" value="1"/>
</dbReference>
<feature type="chain" id="PRO_0000310216" description="ATP-dependent RNA helicase DRS1">
    <location>
        <begin position="1"/>
        <end position="754"/>
    </location>
</feature>
<feature type="domain" description="Helicase ATP-binding" evidence="4">
    <location>
        <begin position="264"/>
        <end position="439"/>
    </location>
</feature>
<feature type="domain" description="Helicase C-terminal" evidence="5">
    <location>
        <begin position="450"/>
        <end position="641"/>
    </location>
</feature>
<feature type="region of interest" description="Disordered" evidence="6">
    <location>
        <begin position="1"/>
        <end position="61"/>
    </location>
</feature>
<feature type="region of interest" description="Disordered" evidence="6">
    <location>
        <begin position="119"/>
        <end position="227"/>
    </location>
</feature>
<feature type="region of interest" description="Disordered" evidence="6">
    <location>
        <begin position="675"/>
        <end position="754"/>
    </location>
</feature>
<feature type="coiled-coil region" evidence="3">
    <location>
        <begin position="623"/>
        <end position="669"/>
    </location>
</feature>
<feature type="short sequence motif" description="Q motif">
    <location>
        <begin position="233"/>
        <end position="261"/>
    </location>
</feature>
<feature type="short sequence motif" description="DEAD box">
    <location>
        <begin position="387"/>
        <end position="390"/>
    </location>
</feature>
<feature type="compositionally biased region" description="Acidic residues" evidence="6">
    <location>
        <begin position="19"/>
        <end position="34"/>
    </location>
</feature>
<feature type="compositionally biased region" description="Basic residues" evidence="6">
    <location>
        <begin position="40"/>
        <end position="51"/>
    </location>
</feature>
<feature type="compositionally biased region" description="Basic and acidic residues" evidence="6">
    <location>
        <begin position="124"/>
        <end position="142"/>
    </location>
</feature>
<feature type="compositionally biased region" description="Acidic residues" evidence="6">
    <location>
        <begin position="167"/>
        <end position="193"/>
    </location>
</feature>
<feature type="compositionally biased region" description="Acidic residues" evidence="6">
    <location>
        <begin position="202"/>
        <end position="211"/>
    </location>
</feature>
<feature type="compositionally biased region" description="Basic residues" evidence="6">
    <location>
        <begin position="696"/>
        <end position="707"/>
    </location>
</feature>
<feature type="compositionally biased region" description="Basic and acidic residues" evidence="6">
    <location>
        <begin position="724"/>
        <end position="736"/>
    </location>
</feature>
<feature type="compositionally biased region" description="Basic residues" evidence="6">
    <location>
        <begin position="737"/>
        <end position="754"/>
    </location>
</feature>
<feature type="binding site" evidence="4">
    <location>
        <begin position="277"/>
        <end position="284"/>
    </location>
    <ligand>
        <name>ATP</name>
        <dbReference type="ChEBI" id="CHEBI:30616"/>
    </ligand>
</feature>
<feature type="modified residue" description="Phosphoserine" evidence="2">
    <location>
        <position position="210"/>
    </location>
</feature>
<proteinExistence type="inferred from homology"/>
<protein>
    <recommendedName>
        <fullName>ATP-dependent RNA helicase DRS1</fullName>
        <ecNumber>3.6.4.13</ecNumber>
    </recommendedName>
    <alternativeName>
        <fullName>Deficiency of ribosomal subunits protein 1</fullName>
    </alternativeName>
</protein>
<gene>
    <name type="primary">DRS1</name>
    <name type="ORF">SCY_3572</name>
</gene>
<name>DRS1_YEAS7</name>
<evidence type="ECO:0000250" key="1"/>
<evidence type="ECO:0000250" key="2">
    <source>
        <dbReference type="UniProtKB" id="P32892"/>
    </source>
</evidence>
<evidence type="ECO:0000255" key="3"/>
<evidence type="ECO:0000255" key="4">
    <source>
        <dbReference type="PROSITE-ProRule" id="PRU00541"/>
    </source>
</evidence>
<evidence type="ECO:0000255" key="5">
    <source>
        <dbReference type="PROSITE-ProRule" id="PRU00542"/>
    </source>
</evidence>
<evidence type="ECO:0000256" key="6">
    <source>
        <dbReference type="SAM" id="MobiDB-lite"/>
    </source>
</evidence>
<evidence type="ECO:0000305" key="7"/>
<comment type="function">
    <text evidence="1">ATP-binding RNA helicase involved in ribosome assembly.</text>
</comment>
<comment type="catalytic activity">
    <reaction>
        <text>ATP + H2O = ADP + phosphate + H(+)</text>
        <dbReference type="Rhea" id="RHEA:13065"/>
        <dbReference type="ChEBI" id="CHEBI:15377"/>
        <dbReference type="ChEBI" id="CHEBI:15378"/>
        <dbReference type="ChEBI" id="CHEBI:30616"/>
        <dbReference type="ChEBI" id="CHEBI:43474"/>
        <dbReference type="ChEBI" id="CHEBI:456216"/>
        <dbReference type="EC" id="3.6.4.13"/>
    </reaction>
</comment>
<comment type="subunit">
    <text evidence="1">Interacts with RRP1 and associates with pre-ribosomal particles.</text>
</comment>
<comment type="subcellular location">
    <subcellularLocation>
        <location evidence="1">Nucleus</location>
        <location evidence="1">Nucleolus</location>
    </subcellularLocation>
</comment>
<comment type="domain">
    <text>The Q motif is unique to and characteristic of the DEAD box family of RNA helicases and controls ATP binding and hydrolysis.</text>
</comment>
<comment type="similarity">
    <text evidence="7">Belongs to the DEAD box helicase family. DDX27/DRS1 subfamily.</text>
</comment>
<accession>A7A0P8</accession>
<reference key="1">
    <citation type="journal article" date="2007" name="Proc. Natl. Acad. Sci. U.S.A.">
        <title>Genome sequencing and comparative analysis of Saccharomyces cerevisiae strain YJM789.</title>
        <authorList>
            <person name="Wei W."/>
            <person name="McCusker J.H."/>
            <person name="Hyman R.W."/>
            <person name="Jones T."/>
            <person name="Ning Y."/>
            <person name="Cao Z."/>
            <person name="Gu Z."/>
            <person name="Bruno D."/>
            <person name="Miranda M."/>
            <person name="Nguyen M."/>
            <person name="Wilhelmy J."/>
            <person name="Komp C."/>
            <person name="Tamse R."/>
            <person name="Wang X."/>
            <person name="Jia P."/>
            <person name="Luedi P."/>
            <person name="Oefner P.J."/>
            <person name="David L."/>
            <person name="Dietrich F.S."/>
            <person name="Li Y."/>
            <person name="Davis R.W."/>
            <person name="Steinmetz L.M."/>
        </authorList>
    </citation>
    <scope>NUCLEOTIDE SEQUENCE [LARGE SCALE GENOMIC DNA]</scope>
    <source>
        <strain>YJM789</strain>
    </source>
</reference>